<sequence>MKKVVLASSSPRRIELLKQFGIKFDIVPSNVDEIIDPDLPPEKNAMNLAKKKAEEVFRRLGESAKDSLIISADTIVFIEGTILGKPSNEEEAFYMLKKISAKRHTVFTGVCIIDDSCRQILVDFEKSYVYIKQMSDEEILRYIKTGEPFDKAGAYAIQGFGSLIVEKVEGCFYNVVGLPLYKLNTMLQKLGYDLMKGEL</sequence>
<name>NTPPA_CALS8</name>
<comment type="function">
    <text evidence="1">Nucleoside triphosphate pyrophosphatase that hydrolyzes dTTP and UTP. May have a dual role in cell division arrest and in preventing the incorporation of modified nucleotides into cellular nucleic acids.</text>
</comment>
<comment type="catalytic activity">
    <reaction evidence="1">
        <text>dTTP + H2O = dTMP + diphosphate + H(+)</text>
        <dbReference type="Rhea" id="RHEA:28534"/>
        <dbReference type="ChEBI" id="CHEBI:15377"/>
        <dbReference type="ChEBI" id="CHEBI:15378"/>
        <dbReference type="ChEBI" id="CHEBI:33019"/>
        <dbReference type="ChEBI" id="CHEBI:37568"/>
        <dbReference type="ChEBI" id="CHEBI:63528"/>
        <dbReference type="EC" id="3.6.1.9"/>
    </reaction>
</comment>
<comment type="catalytic activity">
    <reaction evidence="1">
        <text>UTP + H2O = UMP + diphosphate + H(+)</text>
        <dbReference type="Rhea" id="RHEA:29395"/>
        <dbReference type="ChEBI" id="CHEBI:15377"/>
        <dbReference type="ChEBI" id="CHEBI:15378"/>
        <dbReference type="ChEBI" id="CHEBI:33019"/>
        <dbReference type="ChEBI" id="CHEBI:46398"/>
        <dbReference type="ChEBI" id="CHEBI:57865"/>
        <dbReference type="EC" id="3.6.1.9"/>
    </reaction>
</comment>
<comment type="cofactor">
    <cofactor evidence="1">
        <name>a divalent metal cation</name>
        <dbReference type="ChEBI" id="CHEBI:60240"/>
    </cofactor>
</comment>
<comment type="subcellular location">
    <subcellularLocation>
        <location evidence="1">Cytoplasm</location>
    </subcellularLocation>
</comment>
<comment type="similarity">
    <text evidence="1">Belongs to the Maf family. YhdE subfamily.</text>
</comment>
<reference key="1">
    <citation type="submission" date="2007-04" db="EMBL/GenBank/DDBJ databases">
        <title>Genome sequence of the thermophilic hydrogen-producing bacterium Caldicellulosiruptor saccharolyticus DSM 8903.</title>
        <authorList>
            <person name="Copeland A."/>
            <person name="Lucas S."/>
            <person name="Lapidus A."/>
            <person name="Barry K."/>
            <person name="Detter J.C."/>
            <person name="Glavina del Rio T."/>
            <person name="Hammon N."/>
            <person name="Israni S."/>
            <person name="Dalin E."/>
            <person name="Tice H."/>
            <person name="Pitluck S."/>
            <person name="Kiss H."/>
            <person name="Brettin T."/>
            <person name="Bruce D."/>
            <person name="Han C."/>
            <person name="Schmutz J."/>
            <person name="Larimer F."/>
            <person name="Land M."/>
            <person name="Hauser L."/>
            <person name="Kyrpides N."/>
            <person name="Lykidis A."/>
            <person name="van de Werken H.J.G."/>
            <person name="Verhaart M.R.A."/>
            <person name="VanFossen A.L."/>
            <person name="Lewis D.L."/>
            <person name="Nichols J.D."/>
            <person name="Goorissen H.P."/>
            <person name="van Niel E.W.J."/>
            <person name="Stams F.J.M."/>
            <person name="Willquist K.U."/>
            <person name="Ward D.E."/>
            <person name="van der Oost J."/>
            <person name="Kelly R.M."/>
            <person name="Kengen S.M.W."/>
            <person name="Richardson P."/>
        </authorList>
    </citation>
    <scope>NUCLEOTIDE SEQUENCE [LARGE SCALE GENOMIC DNA]</scope>
    <source>
        <strain>ATCC 43494 / DSM 8903 / Tp8T 6331</strain>
    </source>
</reference>
<protein>
    <recommendedName>
        <fullName evidence="1">dTTP/UTP pyrophosphatase</fullName>
        <shortName evidence="1">dTTPase/UTPase</shortName>
        <ecNumber evidence="1">3.6.1.9</ecNumber>
    </recommendedName>
    <alternativeName>
        <fullName evidence="1">Nucleoside triphosphate pyrophosphatase</fullName>
    </alternativeName>
    <alternativeName>
        <fullName evidence="1">Nucleotide pyrophosphatase</fullName>
        <shortName evidence="1">Nucleotide PPase</shortName>
    </alternativeName>
</protein>
<dbReference type="EC" id="3.6.1.9" evidence="1"/>
<dbReference type="EMBL" id="CP000679">
    <property type="protein sequence ID" value="ABP67450.1"/>
    <property type="molecule type" value="Genomic_DNA"/>
</dbReference>
<dbReference type="SMR" id="A4XKL5"/>
<dbReference type="STRING" id="351627.Csac_1865"/>
<dbReference type="KEGG" id="csc:Csac_1865"/>
<dbReference type="eggNOG" id="COG0424">
    <property type="taxonomic scope" value="Bacteria"/>
</dbReference>
<dbReference type="HOGENOM" id="CLU_040416_0_0_9"/>
<dbReference type="Proteomes" id="UP000000256">
    <property type="component" value="Chromosome"/>
</dbReference>
<dbReference type="GO" id="GO:0005737">
    <property type="term" value="C:cytoplasm"/>
    <property type="evidence" value="ECO:0007669"/>
    <property type="project" value="UniProtKB-SubCell"/>
</dbReference>
<dbReference type="GO" id="GO:0036218">
    <property type="term" value="F:dTTP diphosphatase activity"/>
    <property type="evidence" value="ECO:0007669"/>
    <property type="project" value="RHEA"/>
</dbReference>
<dbReference type="GO" id="GO:0036221">
    <property type="term" value="F:UTP diphosphatase activity"/>
    <property type="evidence" value="ECO:0007669"/>
    <property type="project" value="RHEA"/>
</dbReference>
<dbReference type="GO" id="GO:0009117">
    <property type="term" value="P:nucleotide metabolic process"/>
    <property type="evidence" value="ECO:0007669"/>
    <property type="project" value="UniProtKB-KW"/>
</dbReference>
<dbReference type="CDD" id="cd00555">
    <property type="entry name" value="Maf"/>
    <property type="match status" value="1"/>
</dbReference>
<dbReference type="FunFam" id="3.90.950.10:FF:000005">
    <property type="entry name" value="7-methyl-GTP pyrophosphatase"/>
    <property type="match status" value="1"/>
</dbReference>
<dbReference type="Gene3D" id="3.90.950.10">
    <property type="match status" value="1"/>
</dbReference>
<dbReference type="HAMAP" id="MF_00528">
    <property type="entry name" value="Maf"/>
    <property type="match status" value="1"/>
</dbReference>
<dbReference type="InterPro" id="IPR029001">
    <property type="entry name" value="ITPase-like_fam"/>
</dbReference>
<dbReference type="InterPro" id="IPR003697">
    <property type="entry name" value="Maf-like"/>
</dbReference>
<dbReference type="NCBIfam" id="TIGR00172">
    <property type="entry name" value="maf"/>
    <property type="match status" value="1"/>
</dbReference>
<dbReference type="PANTHER" id="PTHR43213">
    <property type="entry name" value="BIFUNCTIONAL DTTP/UTP PYROPHOSPHATASE/METHYLTRANSFERASE PROTEIN-RELATED"/>
    <property type="match status" value="1"/>
</dbReference>
<dbReference type="PANTHER" id="PTHR43213:SF5">
    <property type="entry name" value="BIFUNCTIONAL DTTP_UTP PYROPHOSPHATASE_METHYLTRANSFERASE PROTEIN-RELATED"/>
    <property type="match status" value="1"/>
</dbReference>
<dbReference type="Pfam" id="PF02545">
    <property type="entry name" value="Maf"/>
    <property type="match status" value="1"/>
</dbReference>
<dbReference type="PIRSF" id="PIRSF006305">
    <property type="entry name" value="Maf"/>
    <property type="match status" value="1"/>
</dbReference>
<dbReference type="SUPFAM" id="SSF52972">
    <property type="entry name" value="ITPase-like"/>
    <property type="match status" value="1"/>
</dbReference>
<evidence type="ECO:0000255" key="1">
    <source>
        <dbReference type="HAMAP-Rule" id="MF_00528"/>
    </source>
</evidence>
<accession>A4XKL5</accession>
<organism>
    <name type="scientific">Caldicellulosiruptor saccharolyticus (strain ATCC 43494 / DSM 8903 / Tp8T 6331)</name>
    <dbReference type="NCBI Taxonomy" id="351627"/>
    <lineage>
        <taxon>Bacteria</taxon>
        <taxon>Bacillati</taxon>
        <taxon>Bacillota</taxon>
        <taxon>Bacillota incertae sedis</taxon>
        <taxon>Caldicellulosiruptorales</taxon>
        <taxon>Caldicellulosiruptoraceae</taxon>
        <taxon>Caldicellulosiruptor</taxon>
    </lineage>
</organism>
<gene>
    <name type="ordered locus">Csac_1865</name>
</gene>
<feature type="chain" id="PRO_1000060935" description="dTTP/UTP pyrophosphatase">
    <location>
        <begin position="1"/>
        <end position="199"/>
    </location>
</feature>
<feature type="active site" description="Proton acceptor" evidence="1">
    <location>
        <position position="73"/>
    </location>
</feature>
<feature type="site" description="Important for substrate specificity" evidence="1">
    <location>
        <position position="12"/>
    </location>
</feature>
<feature type="site" description="Important for substrate specificity" evidence="1">
    <location>
        <position position="74"/>
    </location>
</feature>
<feature type="site" description="Important for substrate specificity" evidence="1">
    <location>
        <position position="158"/>
    </location>
</feature>
<keyword id="KW-0963">Cytoplasm</keyword>
<keyword id="KW-0378">Hydrolase</keyword>
<keyword id="KW-0546">Nucleotide metabolism</keyword>
<proteinExistence type="inferred from homology"/>